<sequence length="317" mass="34367">METWQEVTVHVHRDAQEAVSNLLIETGSQGVAIADSADYIGQKDRFGELYPDVEQSDMIAITAYYPSSTNLADVIATINEQLAELASFGLQVGQVTVDSQELAEEDWADNWKKYYEPARITHDLTIVPSWTDYDASAGEKVIKLDPGMAFGTGTHPTTKMSLFALEQILRGGETVIDVGTGSGVLSIASSLLGAKTIYAYDLDDVAVRVAQENIDLNQGTDNIHVAAGDLLKEVSQEADVIVANILADILVLLTDDAYRLVKKEGYLILSGIISEKLDMVLEAAFSAGFFLETHMVQGEWNALVFKKTDDISGVIGG</sequence>
<reference key="1">
    <citation type="journal article" date="2002" name="Proc. Natl. Acad. Sci. U.S.A.">
        <title>Genome sequence of a serotype M3 strain of group A Streptococcus: phage-encoded toxins, the high-virulence phenotype, and clone emergence.</title>
        <authorList>
            <person name="Beres S.B."/>
            <person name="Sylva G.L."/>
            <person name="Barbian K.D."/>
            <person name="Lei B."/>
            <person name="Hoff J.S."/>
            <person name="Mammarella N.D."/>
            <person name="Liu M.-Y."/>
            <person name="Smoot J.C."/>
            <person name="Porcella S.F."/>
            <person name="Parkins L.D."/>
            <person name="Campbell D.S."/>
            <person name="Smith T.M."/>
            <person name="McCormick J.K."/>
            <person name="Leung D.Y.M."/>
            <person name="Schlievert P.M."/>
            <person name="Musser J.M."/>
        </authorList>
    </citation>
    <scope>NUCLEOTIDE SEQUENCE [LARGE SCALE GENOMIC DNA]</scope>
    <source>
        <strain>ATCC BAA-595 / MGAS315</strain>
    </source>
</reference>
<keyword id="KW-0963">Cytoplasm</keyword>
<keyword id="KW-0489">Methyltransferase</keyword>
<keyword id="KW-0949">S-adenosyl-L-methionine</keyword>
<keyword id="KW-0808">Transferase</keyword>
<comment type="function">
    <text evidence="1">Methylates ribosomal protein L11.</text>
</comment>
<comment type="catalytic activity">
    <reaction evidence="1">
        <text>L-lysyl-[protein] + 3 S-adenosyl-L-methionine = N(6),N(6),N(6)-trimethyl-L-lysyl-[protein] + 3 S-adenosyl-L-homocysteine + 3 H(+)</text>
        <dbReference type="Rhea" id="RHEA:54192"/>
        <dbReference type="Rhea" id="RHEA-COMP:9752"/>
        <dbReference type="Rhea" id="RHEA-COMP:13826"/>
        <dbReference type="ChEBI" id="CHEBI:15378"/>
        <dbReference type="ChEBI" id="CHEBI:29969"/>
        <dbReference type="ChEBI" id="CHEBI:57856"/>
        <dbReference type="ChEBI" id="CHEBI:59789"/>
        <dbReference type="ChEBI" id="CHEBI:61961"/>
    </reaction>
</comment>
<comment type="subcellular location">
    <subcellularLocation>
        <location evidence="1">Cytoplasm</location>
    </subcellularLocation>
</comment>
<comment type="similarity">
    <text evidence="1">Belongs to the methyltransferase superfamily. PrmA family.</text>
</comment>
<comment type="sequence caution" evidence="2">
    <conflict type="erroneous initiation">
        <sequence resource="EMBL-CDS" id="AAM80317"/>
    </conflict>
</comment>
<protein>
    <recommendedName>
        <fullName evidence="1">Ribosomal protein L11 methyltransferase</fullName>
        <shortName evidence="1">L11 Mtase</shortName>
        <ecNumber evidence="1">2.1.1.-</ecNumber>
    </recommendedName>
</protein>
<name>PRMA_STRP3</name>
<evidence type="ECO:0000255" key="1">
    <source>
        <dbReference type="HAMAP-Rule" id="MF_00735"/>
    </source>
</evidence>
<evidence type="ECO:0000305" key="2"/>
<gene>
    <name evidence="1" type="primary">prmA</name>
    <name type="ordered locus">SpyM3_1710</name>
</gene>
<accession>P0DD18</accession>
<accession>Q877Y7</accession>
<accession>Q8K5Q9</accession>
<dbReference type="EC" id="2.1.1.-" evidence="1"/>
<dbReference type="EMBL" id="AE014074">
    <property type="protein sequence ID" value="AAM80317.1"/>
    <property type="status" value="ALT_INIT"/>
    <property type="molecule type" value="Genomic_DNA"/>
</dbReference>
<dbReference type="RefSeq" id="WP_011055040.1">
    <property type="nucleotide sequence ID" value="NC_004070.1"/>
</dbReference>
<dbReference type="SMR" id="P0DD18"/>
<dbReference type="KEGG" id="spg:SpyM3_1710"/>
<dbReference type="HOGENOM" id="CLU_049382_0_1_9"/>
<dbReference type="Proteomes" id="UP000000564">
    <property type="component" value="Chromosome"/>
</dbReference>
<dbReference type="GO" id="GO:0005737">
    <property type="term" value="C:cytoplasm"/>
    <property type="evidence" value="ECO:0007669"/>
    <property type="project" value="UniProtKB-SubCell"/>
</dbReference>
<dbReference type="GO" id="GO:0016279">
    <property type="term" value="F:protein-lysine N-methyltransferase activity"/>
    <property type="evidence" value="ECO:0007669"/>
    <property type="project" value="RHEA"/>
</dbReference>
<dbReference type="GO" id="GO:0032259">
    <property type="term" value="P:methylation"/>
    <property type="evidence" value="ECO:0007669"/>
    <property type="project" value="UniProtKB-KW"/>
</dbReference>
<dbReference type="CDD" id="cd02440">
    <property type="entry name" value="AdoMet_MTases"/>
    <property type="match status" value="1"/>
</dbReference>
<dbReference type="Gene3D" id="3.40.50.150">
    <property type="entry name" value="Vaccinia Virus protein VP39"/>
    <property type="match status" value="1"/>
</dbReference>
<dbReference type="HAMAP" id="MF_00735">
    <property type="entry name" value="Methyltr_PrmA"/>
    <property type="match status" value="1"/>
</dbReference>
<dbReference type="InterPro" id="IPR050078">
    <property type="entry name" value="Ribosomal_L11_MeTrfase_PrmA"/>
</dbReference>
<dbReference type="InterPro" id="IPR004498">
    <property type="entry name" value="Ribosomal_PrmA_MeTrfase"/>
</dbReference>
<dbReference type="InterPro" id="IPR029063">
    <property type="entry name" value="SAM-dependent_MTases_sf"/>
</dbReference>
<dbReference type="NCBIfam" id="TIGR00406">
    <property type="entry name" value="prmA"/>
    <property type="match status" value="1"/>
</dbReference>
<dbReference type="PANTHER" id="PTHR43648">
    <property type="entry name" value="ELECTRON TRANSFER FLAVOPROTEIN BETA SUBUNIT LYSINE METHYLTRANSFERASE"/>
    <property type="match status" value="1"/>
</dbReference>
<dbReference type="PANTHER" id="PTHR43648:SF1">
    <property type="entry name" value="ELECTRON TRANSFER FLAVOPROTEIN BETA SUBUNIT LYSINE METHYLTRANSFERASE"/>
    <property type="match status" value="1"/>
</dbReference>
<dbReference type="Pfam" id="PF06325">
    <property type="entry name" value="PrmA"/>
    <property type="match status" value="1"/>
</dbReference>
<dbReference type="PIRSF" id="PIRSF000401">
    <property type="entry name" value="RPL11_MTase"/>
    <property type="match status" value="1"/>
</dbReference>
<dbReference type="SUPFAM" id="SSF53335">
    <property type="entry name" value="S-adenosyl-L-methionine-dependent methyltransferases"/>
    <property type="match status" value="1"/>
</dbReference>
<feature type="chain" id="PRO_0000192319" description="Ribosomal protein L11 methyltransferase">
    <location>
        <begin position="1"/>
        <end position="317"/>
    </location>
</feature>
<feature type="binding site" evidence="1">
    <location>
        <position position="158"/>
    </location>
    <ligand>
        <name>S-adenosyl-L-methionine</name>
        <dbReference type="ChEBI" id="CHEBI:59789"/>
    </ligand>
</feature>
<feature type="binding site" evidence="1">
    <location>
        <position position="179"/>
    </location>
    <ligand>
        <name>S-adenosyl-L-methionine</name>
        <dbReference type="ChEBI" id="CHEBI:59789"/>
    </ligand>
</feature>
<feature type="binding site" evidence="1">
    <location>
        <position position="201"/>
    </location>
    <ligand>
        <name>S-adenosyl-L-methionine</name>
        <dbReference type="ChEBI" id="CHEBI:59789"/>
    </ligand>
</feature>
<feature type="binding site" evidence="1">
    <location>
        <position position="244"/>
    </location>
    <ligand>
        <name>S-adenosyl-L-methionine</name>
        <dbReference type="ChEBI" id="CHEBI:59789"/>
    </ligand>
</feature>
<organism>
    <name type="scientific">Streptococcus pyogenes serotype M3 (strain ATCC BAA-595 / MGAS315)</name>
    <dbReference type="NCBI Taxonomy" id="198466"/>
    <lineage>
        <taxon>Bacteria</taxon>
        <taxon>Bacillati</taxon>
        <taxon>Bacillota</taxon>
        <taxon>Bacilli</taxon>
        <taxon>Lactobacillales</taxon>
        <taxon>Streptococcaceae</taxon>
        <taxon>Streptococcus</taxon>
    </lineage>
</organism>
<proteinExistence type="inferred from homology"/>